<gene>
    <name evidence="3" type="primary">CIMAP1C</name>
    <name type="synonym">ODF3L1</name>
</gene>
<proteinExistence type="evidence at protein level"/>
<sequence>MKLPKGTRSSVYFAQHPEKEPLPSRQEVKQTPVIMAKIKGPGPAKYLRPSCTGYIDHDISMFKAPAYTLHSRHSEKRMVCHSSPGPCYLLDPKITRFGMSSCPQVPMEERISNLRLNPTLASCQYYFEKIHPPGERRAPQYTFGYRRPYRVMDLNPAPNQYQMPLLLGPNTPVSRAAPCYSLASRDKNWFYKEDVAGGPGPTTYARPEPSIYQNRSPTYSMAKRFAYPLDLTPRPGPGSHEVQQVTVHKPHIPAFTMGIKHSLHLCPLVIDIRD</sequence>
<accession>Q8IXM7</accession>
<keyword id="KW-1267">Proteomics identification</keyword>
<keyword id="KW-1185">Reference proteome</keyword>
<keyword id="KW-0677">Repeat</keyword>
<name>CMA1C_HUMAN</name>
<feature type="chain" id="PRO_0000304785" description="Protein CIMAP1C">
    <location>
        <begin position="1"/>
        <end position="274"/>
    </location>
</feature>
<feature type="repeat" description="STPGR 1">
    <location>
        <begin position="199"/>
        <end position="224"/>
    </location>
</feature>
<feature type="repeat" description="STPGR 2">
    <location>
        <begin position="235"/>
        <end position="260"/>
    </location>
</feature>
<feature type="region of interest" description="Disordered" evidence="1">
    <location>
        <begin position="1"/>
        <end position="27"/>
    </location>
</feature>
<feature type="compositionally biased region" description="Basic and acidic residues" evidence="1">
    <location>
        <begin position="16"/>
        <end position="27"/>
    </location>
</feature>
<feature type="sequence variant" id="VAR_062204" description="In dbSNP:rs55905564.">
    <original>P</original>
    <variation>L</variation>
    <location>
        <position position="41"/>
    </location>
</feature>
<dbReference type="EMBL" id="CH471136">
    <property type="protein sequence ID" value="EAW99238.1"/>
    <property type="molecule type" value="Genomic_DNA"/>
</dbReference>
<dbReference type="EMBL" id="BC039862">
    <property type="protein sequence ID" value="AAH39862.1"/>
    <property type="molecule type" value="mRNA"/>
</dbReference>
<dbReference type="CCDS" id="CCDS10285.1"/>
<dbReference type="RefSeq" id="NP_787077.1">
    <property type="nucleotide sequence ID" value="NM_175881.5"/>
</dbReference>
<dbReference type="BioGRID" id="127801">
    <property type="interactions" value="10"/>
</dbReference>
<dbReference type="FunCoup" id="Q8IXM7">
    <property type="interactions" value="26"/>
</dbReference>
<dbReference type="IntAct" id="Q8IXM7">
    <property type="interactions" value="10"/>
</dbReference>
<dbReference type="STRING" id="9606.ENSP00000329584"/>
<dbReference type="GlyGen" id="Q8IXM7">
    <property type="glycosylation" value="2 sites, 1 O-linked glycan (1 site)"/>
</dbReference>
<dbReference type="iPTMnet" id="Q8IXM7"/>
<dbReference type="PhosphoSitePlus" id="Q8IXM7"/>
<dbReference type="BioMuta" id="ODF3L1"/>
<dbReference type="DMDM" id="74728213"/>
<dbReference type="MassIVE" id="Q8IXM7"/>
<dbReference type="PaxDb" id="9606-ENSP00000329584"/>
<dbReference type="PeptideAtlas" id="Q8IXM7"/>
<dbReference type="ProteomicsDB" id="71032"/>
<dbReference type="Antibodypedia" id="27373">
    <property type="antibodies" value="50 antibodies from 14 providers"/>
</dbReference>
<dbReference type="DNASU" id="161753"/>
<dbReference type="Ensembl" id="ENST00000332145.3">
    <property type="protein sequence ID" value="ENSP00000329584.2"/>
    <property type="gene ID" value="ENSG00000182950.3"/>
</dbReference>
<dbReference type="GeneID" id="161753"/>
<dbReference type="KEGG" id="hsa:161753"/>
<dbReference type="MANE-Select" id="ENST00000332145.3">
    <property type="protein sequence ID" value="ENSP00000329584.2"/>
    <property type="RefSeq nucleotide sequence ID" value="NM_175881.5"/>
    <property type="RefSeq protein sequence ID" value="NP_787077.1"/>
</dbReference>
<dbReference type="UCSC" id="uc002bax.2">
    <property type="organism name" value="human"/>
</dbReference>
<dbReference type="AGR" id="HGNC:28735"/>
<dbReference type="CTD" id="161753"/>
<dbReference type="GeneCards" id="CIMAP1C"/>
<dbReference type="HGNC" id="HGNC:28735">
    <property type="gene designation" value="CIMAP1C"/>
</dbReference>
<dbReference type="HPA" id="ENSG00000182950">
    <property type="expression patterns" value="Tissue enriched (testis)"/>
</dbReference>
<dbReference type="neXtProt" id="NX_Q8IXM7"/>
<dbReference type="OpenTargets" id="ENSG00000182950"/>
<dbReference type="PharmGKB" id="PA134930463"/>
<dbReference type="VEuPathDB" id="HostDB:ENSG00000182950"/>
<dbReference type="eggNOG" id="ENOG502S2VQ">
    <property type="taxonomic scope" value="Eukaryota"/>
</dbReference>
<dbReference type="GeneTree" id="ENSGT00940000162054"/>
<dbReference type="HOGENOM" id="CLU_088282_1_0_1"/>
<dbReference type="InParanoid" id="Q8IXM7"/>
<dbReference type="OMA" id="YTLHTRH"/>
<dbReference type="OrthoDB" id="429991at2759"/>
<dbReference type="PAN-GO" id="Q8IXM7">
    <property type="GO annotations" value="1 GO annotation based on evolutionary models"/>
</dbReference>
<dbReference type="PhylomeDB" id="Q8IXM7"/>
<dbReference type="TreeFam" id="TF325804"/>
<dbReference type="PathwayCommons" id="Q8IXM7"/>
<dbReference type="SignaLink" id="Q8IXM7"/>
<dbReference type="BioGRID-ORCS" id="161753">
    <property type="hits" value="11 hits in 1140 CRISPR screens"/>
</dbReference>
<dbReference type="GenomeRNAi" id="161753"/>
<dbReference type="Pharos" id="Q8IXM7">
    <property type="development level" value="Tdark"/>
</dbReference>
<dbReference type="PRO" id="PR:Q8IXM7"/>
<dbReference type="Proteomes" id="UP000005640">
    <property type="component" value="Chromosome 15"/>
</dbReference>
<dbReference type="RNAct" id="Q8IXM7">
    <property type="molecule type" value="protein"/>
</dbReference>
<dbReference type="Bgee" id="ENSG00000182950">
    <property type="expression patterns" value="Expressed in left testis and 93 other cell types or tissues"/>
</dbReference>
<dbReference type="GO" id="GO:0005856">
    <property type="term" value="C:cytoskeleton"/>
    <property type="evidence" value="ECO:0000318"/>
    <property type="project" value="GO_Central"/>
</dbReference>
<dbReference type="InterPro" id="IPR051291">
    <property type="entry name" value="CIMAP"/>
</dbReference>
<dbReference type="InterPro" id="IPR010736">
    <property type="entry name" value="SHIPPO-rpt"/>
</dbReference>
<dbReference type="PANTHER" id="PTHR21580:SF3">
    <property type="entry name" value="OUTER DENSE FIBER PROTEIN 3-LIKE PROTEIN 1"/>
    <property type="match status" value="1"/>
</dbReference>
<dbReference type="PANTHER" id="PTHR21580">
    <property type="entry name" value="SHIPPO-1-RELATED"/>
    <property type="match status" value="1"/>
</dbReference>
<dbReference type="Pfam" id="PF07004">
    <property type="entry name" value="SHIPPO-rpt"/>
    <property type="match status" value="4"/>
</dbReference>
<reference key="1">
    <citation type="submission" date="2005-09" db="EMBL/GenBank/DDBJ databases">
        <authorList>
            <person name="Mural R.J."/>
            <person name="Istrail S."/>
            <person name="Sutton G.G."/>
            <person name="Florea L."/>
            <person name="Halpern A.L."/>
            <person name="Mobarry C.M."/>
            <person name="Lippert R."/>
            <person name="Walenz B."/>
            <person name="Shatkay H."/>
            <person name="Dew I."/>
            <person name="Miller J.R."/>
            <person name="Flanigan M.J."/>
            <person name="Edwards N.J."/>
            <person name="Bolanos R."/>
            <person name="Fasulo D."/>
            <person name="Halldorsson B.V."/>
            <person name="Hannenhalli S."/>
            <person name="Turner R."/>
            <person name="Yooseph S."/>
            <person name="Lu F."/>
            <person name="Nusskern D.R."/>
            <person name="Shue B.C."/>
            <person name="Zheng X.H."/>
            <person name="Zhong F."/>
            <person name="Delcher A.L."/>
            <person name="Huson D.H."/>
            <person name="Kravitz S.A."/>
            <person name="Mouchard L."/>
            <person name="Reinert K."/>
            <person name="Remington K.A."/>
            <person name="Clark A.G."/>
            <person name="Waterman M.S."/>
            <person name="Eichler E.E."/>
            <person name="Adams M.D."/>
            <person name="Hunkapiller M.W."/>
            <person name="Myers E.W."/>
            <person name="Venter J.C."/>
        </authorList>
    </citation>
    <scope>NUCLEOTIDE SEQUENCE [LARGE SCALE GENOMIC DNA]</scope>
</reference>
<reference key="2">
    <citation type="journal article" date="2004" name="Genome Res.">
        <title>The status, quality, and expansion of the NIH full-length cDNA project: the Mammalian Gene Collection (MGC).</title>
        <authorList>
            <consortium name="The MGC Project Team"/>
        </authorList>
    </citation>
    <scope>NUCLEOTIDE SEQUENCE [LARGE SCALE MRNA]</scope>
    <source>
        <tissue>Brain</tissue>
    </source>
</reference>
<comment type="interaction">
    <interactant intactId="EBI-13331299">
        <id>Q8IXM7</id>
    </interactant>
    <interactant intactId="EBI-2949658">
        <id>O95429</id>
        <label>BAG4</label>
    </interactant>
    <organismsDiffer>false</organismsDiffer>
    <experiments>3</experiments>
</comment>
<comment type="interaction">
    <interactant intactId="EBI-13331299">
        <id>Q8IXM7</id>
    </interactant>
    <interactant intactId="EBI-3867333">
        <id>A8MQ03</id>
        <label>CYSRT1</label>
    </interactant>
    <organismsDiffer>false</organismsDiffer>
    <experiments>3</experiments>
</comment>
<comment type="similarity">
    <text evidence="2">Belongs to the CIMAP family.</text>
</comment>
<protein>
    <recommendedName>
        <fullName evidence="2">Protein CIMAP1C</fullName>
    </recommendedName>
    <alternativeName>
        <fullName evidence="3">Ciliary microtubule associated protein 1C</fullName>
    </alternativeName>
    <alternativeName>
        <fullName>Outer dense fiber protein 3-like protein 1</fullName>
    </alternativeName>
</protein>
<evidence type="ECO:0000256" key="1">
    <source>
        <dbReference type="SAM" id="MobiDB-lite"/>
    </source>
</evidence>
<evidence type="ECO:0000305" key="2"/>
<evidence type="ECO:0000312" key="3">
    <source>
        <dbReference type="HGNC" id="HGNC:28735"/>
    </source>
</evidence>
<organism>
    <name type="scientific">Homo sapiens</name>
    <name type="common">Human</name>
    <dbReference type="NCBI Taxonomy" id="9606"/>
    <lineage>
        <taxon>Eukaryota</taxon>
        <taxon>Metazoa</taxon>
        <taxon>Chordata</taxon>
        <taxon>Craniata</taxon>
        <taxon>Vertebrata</taxon>
        <taxon>Euteleostomi</taxon>
        <taxon>Mammalia</taxon>
        <taxon>Eutheria</taxon>
        <taxon>Euarchontoglires</taxon>
        <taxon>Primates</taxon>
        <taxon>Haplorrhini</taxon>
        <taxon>Catarrhini</taxon>
        <taxon>Hominidae</taxon>
        <taxon>Homo</taxon>
    </lineage>
</organism>